<reference evidence="7" key="1">
    <citation type="submission" date="2004-06" db="EMBL/GenBank/DDBJ databases">
        <authorList>
            <consortium name="NIH - Xenopus Gene Collection (XGC) project"/>
        </authorList>
    </citation>
    <scope>NUCLEOTIDE SEQUENCE [LARGE SCALE MRNA]</scope>
    <source>
        <tissue>Gastrula</tissue>
    </source>
</reference>
<evidence type="ECO:0000250" key="1"/>
<evidence type="ECO:0000250" key="2">
    <source>
        <dbReference type="UniProtKB" id="P30664"/>
    </source>
</evidence>
<evidence type="ECO:0000250" key="3">
    <source>
        <dbReference type="UniProtKB" id="P33991"/>
    </source>
</evidence>
<evidence type="ECO:0000250" key="4">
    <source>
        <dbReference type="UniProtKB" id="P49717"/>
    </source>
</evidence>
<evidence type="ECO:0000255" key="5"/>
<evidence type="ECO:0000256" key="6">
    <source>
        <dbReference type="SAM" id="MobiDB-lite"/>
    </source>
</evidence>
<evidence type="ECO:0000312" key="7">
    <source>
        <dbReference type="EMBL" id="AAH74670.1"/>
    </source>
</evidence>
<name>MCM4_XENTR</name>
<accession>Q6GL41</accession>
<gene>
    <name evidence="7" type="primary">mcm4</name>
</gene>
<feature type="chain" id="PRO_0000240595" description="DNA replication licensing factor mcm4">
    <location>
        <begin position="1"/>
        <end position="863"/>
    </location>
</feature>
<feature type="domain" description="MCM" evidence="5">
    <location>
        <begin position="458"/>
        <end position="667"/>
    </location>
</feature>
<feature type="zinc finger region" description="C4-type" evidence="5">
    <location>
        <begin position="306"/>
        <end position="331"/>
    </location>
</feature>
<feature type="region of interest" description="Disordered" evidence="6">
    <location>
        <begin position="1"/>
        <end position="121"/>
    </location>
</feature>
<feature type="short sequence motif" description="Arginine finger">
    <location>
        <begin position="642"/>
        <end position="645"/>
    </location>
</feature>
<feature type="compositionally biased region" description="Polar residues" evidence="6">
    <location>
        <begin position="54"/>
        <end position="64"/>
    </location>
</feature>
<feature type="compositionally biased region" description="Polar residues" evidence="6">
    <location>
        <begin position="78"/>
        <end position="99"/>
    </location>
</feature>
<feature type="binding site" evidence="3">
    <location>
        <position position="471"/>
    </location>
    <ligand>
        <name>ATP</name>
        <dbReference type="ChEBI" id="CHEBI:30616"/>
        <label>2</label>
        <note>ligand shared with MCM7</note>
    </ligand>
</feature>
<feature type="binding site" evidence="3">
    <location>
        <position position="497"/>
    </location>
    <ligand>
        <name>ATP</name>
        <dbReference type="ChEBI" id="CHEBI:30616"/>
        <label>1</label>
        <note>ligand shared with MCM6</note>
    </ligand>
</feature>
<feature type="binding site" evidence="3">
    <location>
        <position position="516"/>
    </location>
    <ligand>
        <name>ATP</name>
        <dbReference type="ChEBI" id="CHEBI:30616"/>
        <label>2</label>
        <note>ligand shared with MCM7</note>
    </ligand>
</feature>
<feature type="binding site" evidence="3">
    <location>
        <position position="517"/>
    </location>
    <ligand>
        <name>ATP</name>
        <dbReference type="ChEBI" id="CHEBI:30616"/>
        <label>2</label>
        <note>ligand shared with MCM7</note>
    </ligand>
</feature>
<feature type="binding site" evidence="3">
    <location>
        <position position="618"/>
    </location>
    <ligand>
        <name>ATP</name>
        <dbReference type="ChEBI" id="CHEBI:30616"/>
        <label>2</label>
        <note>ligand shared with MCM7</note>
    </ligand>
</feature>
<feature type="binding site" evidence="3">
    <location>
        <position position="643"/>
    </location>
    <ligand>
        <name>ATP</name>
        <dbReference type="ChEBI" id="CHEBI:30616"/>
        <label>1</label>
        <note>ligand shared with MCM6</note>
    </ligand>
</feature>
<feature type="binding site" evidence="3">
    <location>
        <position position="732"/>
    </location>
    <ligand>
        <name>ATP</name>
        <dbReference type="ChEBI" id="CHEBI:30616"/>
        <label>1</label>
        <note>ligand shared with MCM6</note>
    </ligand>
</feature>
<feature type="binding site" evidence="3">
    <location>
        <position position="735"/>
    </location>
    <ligand>
        <name>ATP</name>
        <dbReference type="ChEBI" id="CHEBI:30616"/>
        <label>1</label>
        <note>ligand shared with MCM6</note>
    </ligand>
</feature>
<comment type="function">
    <text evidence="3">Acts as a component of the MCM2-7 complex (MCM complex) which is the replicative helicase essential for 'once per cell cycle' DNA replication initiation and elongation in eukaryotic cells. Core component of CDC45-MCM-GINS (CMG) helicase, the molecular machine that unwinds template DNA during replication, and around which the replisome is built. The active ATPase sites in the MCM2-7 ring are formed through the interaction surfaces of two neighboring subunits such that a critical structure of a conserved arginine finger motif is provided in trans relative to the ATP-binding site of the Walker A box of the adjacent subunit. The six ATPase active sites, however, are likely to contribute differentially to the complex helicase activity.</text>
</comment>
<comment type="catalytic activity">
    <reaction evidence="4">
        <text>ATP + H2O = ADP + phosphate + H(+)</text>
        <dbReference type="Rhea" id="RHEA:13065"/>
        <dbReference type="ChEBI" id="CHEBI:15377"/>
        <dbReference type="ChEBI" id="CHEBI:15378"/>
        <dbReference type="ChEBI" id="CHEBI:30616"/>
        <dbReference type="ChEBI" id="CHEBI:43474"/>
        <dbReference type="ChEBI" id="CHEBI:456216"/>
        <dbReference type="EC" id="3.6.4.12"/>
    </reaction>
    <physiologicalReaction direction="left-to-right" evidence="4">
        <dbReference type="Rhea" id="RHEA:13066"/>
    </physiologicalReaction>
</comment>
<comment type="subunit">
    <text evidence="2">Component of the mcm2-7 complex (RLF-M). The complex forms a toroidal hexameric ring with the proposed subunit order mcm2-mcm6-mcm4-mcm7-mcm3-mcm5. The heterodimer of mmcm3/mcm5 interacts with mcm4, mmcm6, mcm7 and weakly with mcm2. Component of the CMG helicase complex, composed of the mcm2-7 complex, the GINS complex and cdc45.</text>
</comment>
<comment type="subcellular location">
    <subcellularLocation>
        <location evidence="2">Nucleus</location>
    </subcellularLocation>
    <subcellularLocation>
        <location evidence="2">Chromosome</location>
    </subcellularLocation>
    <text evidence="2">Associated with chromatin before the formation of nuclei and detaches from it as DNA replication progresses.</text>
</comment>
<comment type="PTM">
    <text evidence="1">Hyperphosphorylated during mitosis in a mechanism requiring cdc2-cyclin B and other kinases. Undergoes dephosphorylation after exiting mitosis, existing in a partially phosphorylated state in the cytosolic interphase mcm complex which associates with the pre-replication complexes (pre-Rcs). Complete dephosphorylation inactivates the mcm complex, preventing its binding to chromatin. Becomes actively phosphorylated during S phase once the mcm complex is assembled on the chromatin. This chromatin-associated phosphorylation occurs during the activation of the pre-Rcs and is independent of cdks. Phosphorylated by the cdc7-dbf4b complex (By similarity).</text>
</comment>
<comment type="miscellaneous">
    <text evidence="4">Early fractionation of eukaryotic MCM proteins yielded a variety of dimeric, trimeric and tetrameric complexes with unclear biological significance. Specifically a MCM467 subcomplex is shown to have in vitro helicase activity which is inhibited by the MCM2 subunit. The MCM2-7 hexamer is the proposed physiological active complex.</text>
</comment>
<comment type="similarity">
    <text evidence="5">Belongs to the MCM family.</text>
</comment>
<sequence>MSSPTSTPSRRRNKRGRGSNPPTPHGEEVQSPPSQRRRTEDSTSIGELLPMPTSPSGDLQSPSGQELMFSSPAPSRHSALQSELDLSSPLTYGTPSSRVEGTPRSGIRGTPARQRPDLGSARKVKQVDLHSDQPAAEELVTSEQSLGQKLVIWGTDVNVATCKEKFQRFVQRFIDPLAKEEENVGLDLNEPIYMQRLEEINVVGEPFLNVDCDHLRSFDQDLYRQLVCYPQEVIPTFDMAANEIFFERYPDSILEHQIQVRPYNALKTRNMRSLNPEDIDQLITISGMVIRTSQIIPEMQEAFFKCQVCAFTTRVEIDRGRISEPSVCKHCNTTHSMALIHNRSMFSDKQMIKLQESPEDMPAGQTPHTTILYGHNDLVDKVQPGDRVNVTGIYRAVPIRVNPRVRNVKSVYKTHIDVIHYRKTDAKRLHGIDEDTEQKMFTEERVAMLKELAAKPDIYERLASALAPSIYEHEDIKKGILLQLFGGTRKDFSHTGRGKFRAEVNILLCGDPGTSKSQLLQYVYNLVPRGQYTSGKGSSAVGLTAYVMKDPETRQLVLQTGALVLSDNGICCIDEFDKMNESTRSVLHEVMEQQTLSIAKAGIICQLNARTSVLAAANPVESQWNPKKTTIENIQLPHTLLSRFDLIFLMLDPQDETYDRRLAHHLVALYYQSEEQMKEEHLDMAVLKDYIAYARTYVNPRLGEEASQALIEAYVDMRKIGSGRGMVSAYPRQLESLIRLSEAHAKVRFSSKVETIDVEEAKRLHREALKQSATDPRTGIVDISILTTGMSATARKRKEELAQVLKKLIQSKGKTPALKYQQLFEDLRGQSDAAVTKDMFDEALHALADEDYLTVTGKTVRLL</sequence>
<organism>
    <name type="scientific">Xenopus tropicalis</name>
    <name type="common">Western clawed frog</name>
    <name type="synonym">Silurana tropicalis</name>
    <dbReference type="NCBI Taxonomy" id="8364"/>
    <lineage>
        <taxon>Eukaryota</taxon>
        <taxon>Metazoa</taxon>
        <taxon>Chordata</taxon>
        <taxon>Craniata</taxon>
        <taxon>Vertebrata</taxon>
        <taxon>Euteleostomi</taxon>
        <taxon>Amphibia</taxon>
        <taxon>Batrachia</taxon>
        <taxon>Anura</taxon>
        <taxon>Pipoidea</taxon>
        <taxon>Pipidae</taxon>
        <taxon>Xenopodinae</taxon>
        <taxon>Xenopus</taxon>
        <taxon>Silurana</taxon>
    </lineage>
</organism>
<proteinExistence type="evidence at transcript level"/>
<dbReference type="EC" id="3.6.4.12" evidence="4"/>
<dbReference type="EMBL" id="BC074670">
    <property type="protein sequence ID" value="AAH74670.1"/>
    <property type="molecule type" value="mRNA"/>
</dbReference>
<dbReference type="RefSeq" id="NP_001005655.1">
    <property type="nucleotide sequence ID" value="NM_001005655.1"/>
</dbReference>
<dbReference type="RefSeq" id="XP_012819970.1">
    <property type="nucleotide sequence ID" value="XM_012964516.3"/>
</dbReference>
<dbReference type="SMR" id="Q6GL41"/>
<dbReference type="FunCoup" id="Q6GL41">
    <property type="interactions" value="2620"/>
</dbReference>
<dbReference type="STRING" id="8364.ENSXETP00000014638"/>
<dbReference type="PaxDb" id="8364-ENSXETP00000010537"/>
<dbReference type="DNASU" id="448137"/>
<dbReference type="GeneID" id="448137"/>
<dbReference type="KEGG" id="xtr:448137"/>
<dbReference type="AGR" id="Xenbase:XB-GENE-1011481"/>
<dbReference type="CTD" id="4173"/>
<dbReference type="Xenbase" id="XB-GENE-1011481">
    <property type="gene designation" value="mcm4"/>
</dbReference>
<dbReference type="eggNOG" id="KOG0478">
    <property type="taxonomic scope" value="Eukaryota"/>
</dbReference>
<dbReference type="InParanoid" id="Q6GL41"/>
<dbReference type="OMA" id="AFFKCNV"/>
<dbReference type="OrthoDB" id="10251574at2759"/>
<dbReference type="Reactome" id="R-XTR-68867">
    <property type="pathway name" value="Assembly of the pre-replicative complex"/>
</dbReference>
<dbReference type="Reactome" id="R-XTR-68949">
    <property type="pathway name" value="Orc1 removal from chromatin"/>
</dbReference>
<dbReference type="Reactome" id="R-XTR-68962">
    <property type="pathway name" value="Activation of the pre-replicative complex"/>
</dbReference>
<dbReference type="Reactome" id="R-XTR-69052">
    <property type="pathway name" value="Switching of origins to a post-replicative state"/>
</dbReference>
<dbReference type="Proteomes" id="UP000008143">
    <property type="component" value="Chromosome 6"/>
</dbReference>
<dbReference type="Bgee" id="ENSXETG00000004854">
    <property type="expression patterns" value="Expressed in ovary and 15 other cell types or tissues"/>
</dbReference>
<dbReference type="GO" id="GO:0000785">
    <property type="term" value="C:chromatin"/>
    <property type="evidence" value="ECO:0000250"/>
    <property type="project" value="UniProtKB"/>
</dbReference>
<dbReference type="GO" id="GO:0071162">
    <property type="term" value="C:CMG complex"/>
    <property type="evidence" value="ECO:0000250"/>
    <property type="project" value="UniProtKB"/>
</dbReference>
<dbReference type="GO" id="GO:0042555">
    <property type="term" value="C:MCM complex"/>
    <property type="evidence" value="ECO:0000250"/>
    <property type="project" value="UniProtKB"/>
</dbReference>
<dbReference type="GO" id="GO:0005524">
    <property type="term" value="F:ATP binding"/>
    <property type="evidence" value="ECO:0007669"/>
    <property type="project" value="UniProtKB-KW"/>
</dbReference>
<dbReference type="GO" id="GO:0016887">
    <property type="term" value="F:ATP hydrolysis activity"/>
    <property type="evidence" value="ECO:0007669"/>
    <property type="project" value="RHEA"/>
</dbReference>
<dbReference type="GO" id="GO:0003682">
    <property type="term" value="F:chromatin binding"/>
    <property type="evidence" value="ECO:0007669"/>
    <property type="project" value="Ensembl"/>
</dbReference>
<dbReference type="GO" id="GO:0003677">
    <property type="term" value="F:DNA binding"/>
    <property type="evidence" value="ECO:0007669"/>
    <property type="project" value="UniProtKB-KW"/>
</dbReference>
<dbReference type="GO" id="GO:0003678">
    <property type="term" value="F:DNA helicase activity"/>
    <property type="evidence" value="ECO:0007669"/>
    <property type="project" value="InterPro"/>
</dbReference>
<dbReference type="GO" id="GO:0008270">
    <property type="term" value="F:zinc ion binding"/>
    <property type="evidence" value="ECO:0007669"/>
    <property type="project" value="UniProtKB-KW"/>
</dbReference>
<dbReference type="GO" id="GO:0044786">
    <property type="term" value="P:cell cycle DNA replication"/>
    <property type="evidence" value="ECO:0000250"/>
    <property type="project" value="UniProtKB"/>
</dbReference>
<dbReference type="GO" id="GO:0006270">
    <property type="term" value="P:DNA replication initiation"/>
    <property type="evidence" value="ECO:0007669"/>
    <property type="project" value="InterPro"/>
</dbReference>
<dbReference type="GO" id="GO:0030174">
    <property type="term" value="P:regulation of DNA-templated DNA replication initiation"/>
    <property type="evidence" value="ECO:0000250"/>
    <property type="project" value="UniProtKB"/>
</dbReference>
<dbReference type="GO" id="GO:0001878">
    <property type="term" value="P:response to yeast"/>
    <property type="evidence" value="ECO:0007669"/>
    <property type="project" value="Ensembl"/>
</dbReference>
<dbReference type="CDD" id="cd17755">
    <property type="entry name" value="MCM4"/>
    <property type="match status" value="1"/>
</dbReference>
<dbReference type="FunFam" id="2.20.28.10:FF:000003">
    <property type="entry name" value="DNA helicase"/>
    <property type="match status" value="1"/>
</dbReference>
<dbReference type="FunFam" id="3.30.1640.10:FF:000001">
    <property type="entry name" value="DNA helicase"/>
    <property type="match status" value="1"/>
</dbReference>
<dbReference type="FunFam" id="3.40.50.300:FF:000217">
    <property type="entry name" value="DNA helicase"/>
    <property type="match status" value="1"/>
</dbReference>
<dbReference type="Gene3D" id="2.20.28.10">
    <property type="match status" value="1"/>
</dbReference>
<dbReference type="Gene3D" id="3.30.1640.10">
    <property type="entry name" value="mini-chromosome maintenance (MCM) complex, chain A, domain 1"/>
    <property type="match status" value="1"/>
</dbReference>
<dbReference type="Gene3D" id="2.40.50.140">
    <property type="entry name" value="Nucleic acid-binding proteins"/>
    <property type="match status" value="1"/>
</dbReference>
<dbReference type="Gene3D" id="3.40.50.300">
    <property type="entry name" value="P-loop containing nucleotide triphosphate hydrolases"/>
    <property type="match status" value="1"/>
</dbReference>
<dbReference type="InterPro" id="IPR031327">
    <property type="entry name" value="MCM"/>
</dbReference>
<dbReference type="InterPro" id="IPR008047">
    <property type="entry name" value="MCM_4"/>
</dbReference>
<dbReference type="InterPro" id="IPR018525">
    <property type="entry name" value="MCM_CS"/>
</dbReference>
<dbReference type="InterPro" id="IPR001208">
    <property type="entry name" value="MCM_dom"/>
</dbReference>
<dbReference type="InterPro" id="IPR041562">
    <property type="entry name" value="MCM_lid"/>
</dbReference>
<dbReference type="InterPro" id="IPR027925">
    <property type="entry name" value="MCM_N"/>
</dbReference>
<dbReference type="InterPro" id="IPR033762">
    <property type="entry name" value="MCM_OB"/>
</dbReference>
<dbReference type="InterPro" id="IPR012340">
    <property type="entry name" value="NA-bd_OB-fold"/>
</dbReference>
<dbReference type="InterPro" id="IPR027417">
    <property type="entry name" value="P-loop_NTPase"/>
</dbReference>
<dbReference type="PANTHER" id="PTHR11630">
    <property type="entry name" value="DNA REPLICATION LICENSING FACTOR MCM FAMILY MEMBER"/>
    <property type="match status" value="1"/>
</dbReference>
<dbReference type="PANTHER" id="PTHR11630:SF66">
    <property type="entry name" value="DNA REPLICATION LICENSING FACTOR MCM4"/>
    <property type="match status" value="1"/>
</dbReference>
<dbReference type="Pfam" id="PF00493">
    <property type="entry name" value="MCM"/>
    <property type="match status" value="1"/>
</dbReference>
<dbReference type="Pfam" id="PF21128">
    <property type="entry name" value="MCM4_WHD"/>
    <property type="match status" value="1"/>
</dbReference>
<dbReference type="Pfam" id="PF17855">
    <property type="entry name" value="MCM_lid"/>
    <property type="match status" value="1"/>
</dbReference>
<dbReference type="Pfam" id="PF14551">
    <property type="entry name" value="MCM_N"/>
    <property type="match status" value="1"/>
</dbReference>
<dbReference type="Pfam" id="PF17207">
    <property type="entry name" value="MCM_OB"/>
    <property type="match status" value="1"/>
</dbReference>
<dbReference type="PRINTS" id="PR01657">
    <property type="entry name" value="MCMFAMILY"/>
</dbReference>
<dbReference type="PRINTS" id="PR01660">
    <property type="entry name" value="MCMPROTEIN4"/>
</dbReference>
<dbReference type="SMART" id="SM00350">
    <property type="entry name" value="MCM"/>
    <property type="match status" value="1"/>
</dbReference>
<dbReference type="SUPFAM" id="SSF50249">
    <property type="entry name" value="Nucleic acid-binding proteins"/>
    <property type="match status" value="1"/>
</dbReference>
<dbReference type="SUPFAM" id="SSF52540">
    <property type="entry name" value="P-loop containing nucleoside triphosphate hydrolases"/>
    <property type="match status" value="1"/>
</dbReference>
<dbReference type="PROSITE" id="PS00847">
    <property type="entry name" value="MCM_1"/>
    <property type="match status" value="1"/>
</dbReference>
<dbReference type="PROSITE" id="PS50051">
    <property type="entry name" value="MCM_2"/>
    <property type="match status" value="1"/>
</dbReference>
<protein>
    <recommendedName>
        <fullName>DNA replication licensing factor mcm4</fullName>
        <ecNumber evidence="4">3.6.4.12</ecNumber>
    </recommendedName>
    <alternativeName>
        <fullName>Minichromosome maintenance protein 4</fullName>
    </alternativeName>
</protein>
<keyword id="KW-0067">ATP-binding</keyword>
<keyword id="KW-0131">Cell cycle</keyword>
<keyword id="KW-0158">Chromosome</keyword>
<keyword id="KW-0235">DNA replication</keyword>
<keyword id="KW-0238">DNA-binding</keyword>
<keyword id="KW-0347">Helicase</keyword>
<keyword id="KW-0378">Hydrolase</keyword>
<keyword id="KW-0479">Metal-binding</keyword>
<keyword id="KW-0547">Nucleotide-binding</keyword>
<keyword id="KW-0539">Nucleus</keyword>
<keyword id="KW-0597">Phosphoprotein</keyword>
<keyword id="KW-1185">Reference proteome</keyword>
<keyword id="KW-0862">Zinc</keyword>
<keyword id="KW-0863">Zinc-finger</keyword>